<dbReference type="EC" id="5.6.2.2" evidence="1"/>
<dbReference type="EMBL" id="CP001340">
    <property type="protein sequence ID" value="ACL93626.2"/>
    <property type="status" value="ALT_INIT"/>
    <property type="molecule type" value="Genomic_DNA"/>
</dbReference>
<dbReference type="EMBL" id="U37793">
    <property type="protein sequence ID" value="AAB51450.1"/>
    <property type="status" value="ALT_INIT"/>
    <property type="molecule type" value="Genomic_DNA"/>
</dbReference>
<dbReference type="EMBL" id="U00592">
    <property type="protein sequence ID" value="AAC43046.2"/>
    <property type="status" value="ALT_INIT"/>
    <property type="molecule type" value="Genomic_DNA"/>
</dbReference>
<dbReference type="RefSeq" id="YP_002515534.4">
    <property type="nucleotide sequence ID" value="NC_011916.1"/>
</dbReference>
<dbReference type="SMR" id="B8GXQ0"/>
<dbReference type="GeneID" id="7332413"/>
<dbReference type="KEGG" id="ccs:CCNA_00159"/>
<dbReference type="PATRIC" id="fig|565050.3.peg.157"/>
<dbReference type="HOGENOM" id="CLU_006146_0_1_5"/>
<dbReference type="OrthoDB" id="9802808at2"/>
<dbReference type="PhylomeDB" id="B8GXQ0"/>
<dbReference type="Proteomes" id="UP000001364">
    <property type="component" value="Chromosome"/>
</dbReference>
<dbReference type="GO" id="GO:0005694">
    <property type="term" value="C:chromosome"/>
    <property type="evidence" value="ECO:0007669"/>
    <property type="project" value="InterPro"/>
</dbReference>
<dbReference type="GO" id="GO:0005737">
    <property type="term" value="C:cytoplasm"/>
    <property type="evidence" value="ECO:0007669"/>
    <property type="project" value="UniProtKB-SubCell"/>
</dbReference>
<dbReference type="GO" id="GO:0005524">
    <property type="term" value="F:ATP binding"/>
    <property type="evidence" value="ECO:0007669"/>
    <property type="project" value="UniProtKB-UniRule"/>
</dbReference>
<dbReference type="GO" id="GO:0003677">
    <property type="term" value="F:DNA binding"/>
    <property type="evidence" value="ECO:0007669"/>
    <property type="project" value="UniProtKB-KW"/>
</dbReference>
<dbReference type="GO" id="GO:0003918">
    <property type="term" value="F:DNA topoisomerase type II (double strand cut, ATP-hydrolyzing) activity"/>
    <property type="evidence" value="ECO:0007669"/>
    <property type="project" value="UniProtKB-UniRule"/>
</dbReference>
<dbReference type="GO" id="GO:0046872">
    <property type="term" value="F:metal ion binding"/>
    <property type="evidence" value="ECO:0007669"/>
    <property type="project" value="UniProtKB-KW"/>
</dbReference>
<dbReference type="GO" id="GO:0006265">
    <property type="term" value="P:DNA topological change"/>
    <property type="evidence" value="ECO:0007669"/>
    <property type="project" value="UniProtKB-UniRule"/>
</dbReference>
<dbReference type="GO" id="GO:0006261">
    <property type="term" value="P:DNA-templated DNA replication"/>
    <property type="evidence" value="ECO:0007669"/>
    <property type="project" value="UniProtKB-UniRule"/>
</dbReference>
<dbReference type="CDD" id="cd16928">
    <property type="entry name" value="HATPase_GyrB-like"/>
    <property type="match status" value="1"/>
</dbReference>
<dbReference type="CDD" id="cd00822">
    <property type="entry name" value="TopoII_Trans_DNA_gyrase"/>
    <property type="match status" value="1"/>
</dbReference>
<dbReference type="CDD" id="cd03366">
    <property type="entry name" value="TOPRIM_TopoIIA_GyrB"/>
    <property type="match status" value="1"/>
</dbReference>
<dbReference type="FunFam" id="3.30.230.10:FF:000005">
    <property type="entry name" value="DNA gyrase subunit B"/>
    <property type="match status" value="1"/>
</dbReference>
<dbReference type="FunFam" id="3.30.565.10:FF:000002">
    <property type="entry name" value="DNA gyrase subunit B"/>
    <property type="match status" value="1"/>
</dbReference>
<dbReference type="FunFam" id="3.40.50.670:FF:000007">
    <property type="entry name" value="DNA gyrase subunit B"/>
    <property type="match status" value="1"/>
</dbReference>
<dbReference type="Gene3D" id="3.30.230.10">
    <property type="match status" value="1"/>
</dbReference>
<dbReference type="Gene3D" id="3.40.50.670">
    <property type="match status" value="2"/>
</dbReference>
<dbReference type="Gene3D" id="3.30.565.10">
    <property type="entry name" value="Histidine kinase-like ATPase, C-terminal domain"/>
    <property type="match status" value="1"/>
</dbReference>
<dbReference type="HAMAP" id="MF_01898">
    <property type="entry name" value="GyrB"/>
    <property type="match status" value="1"/>
</dbReference>
<dbReference type="InterPro" id="IPR002288">
    <property type="entry name" value="DNA_gyrase_B_C"/>
</dbReference>
<dbReference type="InterPro" id="IPR011557">
    <property type="entry name" value="GyrB"/>
</dbReference>
<dbReference type="InterPro" id="IPR049353">
    <property type="entry name" value="GyrB_hook"/>
</dbReference>
<dbReference type="InterPro" id="IPR036890">
    <property type="entry name" value="HATPase_C_sf"/>
</dbReference>
<dbReference type="InterPro" id="IPR020568">
    <property type="entry name" value="Ribosomal_Su5_D2-typ_SF"/>
</dbReference>
<dbReference type="InterPro" id="IPR014721">
    <property type="entry name" value="Ribsml_uS5_D2-typ_fold_subgr"/>
</dbReference>
<dbReference type="InterPro" id="IPR001241">
    <property type="entry name" value="Topo_IIA"/>
</dbReference>
<dbReference type="InterPro" id="IPR013760">
    <property type="entry name" value="Topo_IIA-like_dom_sf"/>
</dbReference>
<dbReference type="InterPro" id="IPR000565">
    <property type="entry name" value="Topo_IIA_B"/>
</dbReference>
<dbReference type="InterPro" id="IPR013759">
    <property type="entry name" value="Topo_IIA_B_C"/>
</dbReference>
<dbReference type="InterPro" id="IPR013506">
    <property type="entry name" value="Topo_IIA_bsu_dom2"/>
</dbReference>
<dbReference type="InterPro" id="IPR018522">
    <property type="entry name" value="TopoIIA_CS"/>
</dbReference>
<dbReference type="InterPro" id="IPR006171">
    <property type="entry name" value="TOPRIM_dom"/>
</dbReference>
<dbReference type="InterPro" id="IPR034160">
    <property type="entry name" value="TOPRIM_GyrB"/>
</dbReference>
<dbReference type="NCBIfam" id="TIGR01059">
    <property type="entry name" value="gyrB"/>
    <property type="match status" value="1"/>
</dbReference>
<dbReference type="NCBIfam" id="NF004189">
    <property type="entry name" value="PRK05644.1"/>
    <property type="match status" value="1"/>
</dbReference>
<dbReference type="NCBIfam" id="NF011501">
    <property type="entry name" value="PRK14939.1"/>
    <property type="match status" value="1"/>
</dbReference>
<dbReference type="PANTHER" id="PTHR45866:SF1">
    <property type="entry name" value="DNA GYRASE SUBUNIT B, MITOCHONDRIAL"/>
    <property type="match status" value="1"/>
</dbReference>
<dbReference type="PANTHER" id="PTHR45866">
    <property type="entry name" value="DNA GYRASE/TOPOISOMERASE SUBUNIT B"/>
    <property type="match status" value="1"/>
</dbReference>
<dbReference type="Pfam" id="PF00204">
    <property type="entry name" value="DNA_gyraseB"/>
    <property type="match status" value="1"/>
</dbReference>
<dbReference type="Pfam" id="PF00986">
    <property type="entry name" value="DNA_gyraseB_C"/>
    <property type="match status" value="1"/>
</dbReference>
<dbReference type="Pfam" id="PF21249">
    <property type="entry name" value="GyrB_hook"/>
    <property type="match status" value="1"/>
</dbReference>
<dbReference type="Pfam" id="PF02518">
    <property type="entry name" value="HATPase_c"/>
    <property type="match status" value="1"/>
</dbReference>
<dbReference type="Pfam" id="PF01751">
    <property type="entry name" value="Toprim"/>
    <property type="match status" value="1"/>
</dbReference>
<dbReference type="PRINTS" id="PR01159">
    <property type="entry name" value="DNAGYRASEB"/>
</dbReference>
<dbReference type="PRINTS" id="PR00418">
    <property type="entry name" value="TPI2FAMILY"/>
</dbReference>
<dbReference type="SMART" id="SM00387">
    <property type="entry name" value="HATPase_c"/>
    <property type="match status" value="1"/>
</dbReference>
<dbReference type="SMART" id="SM00433">
    <property type="entry name" value="TOP2c"/>
    <property type="match status" value="1"/>
</dbReference>
<dbReference type="SUPFAM" id="SSF55874">
    <property type="entry name" value="ATPase domain of HSP90 chaperone/DNA topoisomerase II/histidine kinase"/>
    <property type="match status" value="1"/>
</dbReference>
<dbReference type="SUPFAM" id="SSF54211">
    <property type="entry name" value="Ribosomal protein S5 domain 2-like"/>
    <property type="match status" value="1"/>
</dbReference>
<dbReference type="SUPFAM" id="SSF56719">
    <property type="entry name" value="Type II DNA topoisomerase"/>
    <property type="match status" value="1"/>
</dbReference>
<dbReference type="PROSITE" id="PS00177">
    <property type="entry name" value="TOPOISOMERASE_II"/>
    <property type="match status" value="1"/>
</dbReference>
<dbReference type="PROSITE" id="PS50880">
    <property type="entry name" value="TOPRIM"/>
    <property type="match status" value="1"/>
</dbReference>
<comment type="function">
    <text evidence="1">A type II topoisomerase that negatively supercoils closed circular double-stranded (ds) DNA in an ATP-dependent manner to modulate DNA topology and maintain chromosomes in an underwound state. Negative supercoiling favors strand separation, and DNA replication, transcription, recombination and repair, all of which involve strand separation. Also able to catalyze the interconversion of other topological isomers of dsDNA rings, including catenanes and knotted rings. Type II topoisomerases break and join 2 DNA strands simultaneously in an ATP-dependent manner.</text>
</comment>
<comment type="catalytic activity">
    <reaction evidence="1">
        <text>ATP-dependent breakage, passage and rejoining of double-stranded DNA.</text>
        <dbReference type="EC" id="5.6.2.2"/>
    </reaction>
</comment>
<comment type="cofactor">
    <cofactor evidence="1">
        <name>Mg(2+)</name>
        <dbReference type="ChEBI" id="CHEBI:18420"/>
    </cofactor>
    <cofactor evidence="1">
        <name>Mn(2+)</name>
        <dbReference type="ChEBI" id="CHEBI:29035"/>
    </cofactor>
    <cofactor evidence="1">
        <name>Ca(2+)</name>
        <dbReference type="ChEBI" id="CHEBI:29108"/>
    </cofactor>
    <text evidence="1">Binds two Mg(2+) per subunit. The magnesium ions form salt bridges with both the protein and the DNA. Can also accept other divalent metal cations, such as Mn(2+) or Ca(2+).</text>
</comment>
<comment type="subunit">
    <text evidence="1">Heterotetramer, composed of two GyrA and two GyrB chains. In the heterotetramer, GyrA contains the active site tyrosine that forms a transient covalent intermediate with DNA, while GyrB binds cofactors and catalyzes ATP hydrolysis.</text>
</comment>
<comment type="subcellular location">
    <subcellularLocation>
        <location evidence="1">Cytoplasm</location>
    </subcellularLocation>
</comment>
<comment type="induction">
    <text evidence="2">Transcription is induced just prior to the onset of DNA replication, at the swarmer-to-stalked-cell transition, lasts through the stalked-cell phase and then decreases in the predivisional cell.</text>
</comment>
<comment type="miscellaneous">
    <text evidence="1">Few gyrases are as efficient as E.coli at forming negative supercoils. Not all organisms have 2 type II topoisomerases; in organisms with a single type II topoisomerase this enzyme also has to decatenate newly replicated chromosomes.</text>
</comment>
<comment type="miscellaneous">
    <text evidence="4">This protein may be 16 amino acids longer at the N-terminus, in which case it would overlap with the stop codon for recF, the upstream gene, with which is might be translationally coupled (PubMed:9079919).</text>
</comment>
<comment type="similarity">
    <text evidence="1">Belongs to the type II topoisomerase GyrB family.</text>
</comment>
<comment type="sequence caution" evidence="3">
    <conflict type="erroneous initiation">
        <sequence resource="EMBL-CDS" id="AAB51450"/>
    </conflict>
    <text>Extended N-terminus.</text>
</comment>
<comment type="sequence caution" evidence="3">
    <conflict type="erroneous initiation">
        <sequence resource="EMBL-CDS" id="AAC43046"/>
    </conflict>
    <text>Extended N-terminus.</text>
</comment>
<comment type="sequence caution" evidence="3">
    <conflict type="erroneous initiation">
        <sequence resource="EMBL-CDS" id="ACL93626"/>
    </conflict>
    <text>Extended N-terminus.</text>
</comment>
<protein>
    <recommendedName>
        <fullName evidence="1">DNA gyrase subunit B</fullName>
        <ecNumber evidence="1">5.6.2.2</ecNumber>
    </recommendedName>
</protein>
<reference key="1">
    <citation type="journal article" date="2010" name="J. Bacteriol.">
        <title>The genetic basis of laboratory adaptation in Caulobacter crescentus.</title>
        <authorList>
            <person name="Marks M.E."/>
            <person name="Castro-Rojas C.M."/>
            <person name="Teiling C."/>
            <person name="Du L."/>
            <person name="Kapatral V."/>
            <person name="Walunas T.L."/>
            <person name="Crosson S."/>
        </authorList>
    </citation>
    <scope>NUCLEOTIDE SEQUENCE [LARGE SCALE GENOMIC DNA]</scope>
    <source>
        <strain>NA1000 / CB15N</strain>
    </source>
</reference>
<reference key="2">
    <citation type="journal article" date="1997" name="J. Bacteriol.">
        <title>Transcription of genes encoding DNA replication proteins is coincident with cell cycle control of DNA replication in Caulobacter crescentus.</title>
        <authorList>
            <person name="Roberts R.C."/>
            <person name="Shapiro L."/>
        </authorList>
    </citation>
    <scope>NUCLEOTIDE SEQUENCE [GENOMIC DNA] OF 1-196</scope>
    <scope>INDUCTION</scope>
    <source>
        <strain>NA1000 / CB15N</strain>
    </source>
</reference>
<reference key="3">
    <citation type="journal article" date="1993" name="J. Bacteriol.">
        <title>Asymmetric expression of the gyrase B gene from the replication-competent chromosome in the Caulobacter crescentus predivisional cell.</title>
        <authorList>
            <person name="Rizzo M.F."/>
            <person name="Shapiro L."/>
            <person name="Gober J."/>
        </authorList>
    </citation>
    <scope>NUCLEOTIDE SEQUENCE [GENOMIC DNA] OF 1-187</scope>
</reference>
<evidence type="ECO:0000255" key="1">
    <source>
        <dbReference type="HAMAP-Rule" id="MF_01898"/>
    </source>
</evidence>
<evidence type="ECO:0000269" key="2">
    <source>
    </source>
</evidence>
<evidence type="ECO:0000305" key="3"/>
<evidence type="ECO:0000305" key="4">
    <source>
    </source>
</evidence>
<organism>
    <name type="scientific">Caulobacter vibrioides (strain NA1000 / CB15N)</name>
    <name type="common">Caulobacter crescentus</name>
    <dbReference type="NCBI Taxonomy" id="565050"/>
    <lineage>
        <taxon>Bacteria</taxon>
        <taxon>Pseudomonadati</taxon>
        <taxon>Pseudomonadota</taxon>
        <taxon>Alphaproteobacteria</taxon>
        <taxon>Caulobacterales</taxon>
        <taxon>Caulobacteraceae</taxon>
        <taxon>Caulobacter</taxon>
    </lineage>
</organism>
<feature type="chain" id="PRO_0000378314" description="DNA gyrase subunit B">
    <location>
        <begin position="1"/>
        <end position="805"/>
    </location>
</feature>
<feature type="domain" description="Toprim" evidence="1">
    <location>
        <begin position="435"/>
        <end position="550"/>
    </location>
</feature>
<feature type="binding site" evidence="1">
    <location>
        <position position="441"/>
    </location>
    <ligand>
        <name>Mg(2+)</name>
        <dbReference type="ChEBI" id="CHEBI:18420"/>
        <label>1</label>
        <note>catalytic</note>
    </ligand>
</feature>
<feature type="binding site" evidence="1">
    <location>
        <position position="515"/>
    </location>
    <ligand>
        <name>Mg(2+)</name>
        <dbReference type="ChEBI" id="CHEBI:18420"/>
        <label>1</label>
        <note>catalytic</note>
    </ligand>
</feature>
<feature type="binding site" evidence="1">
    <location>
        <position position="515"/>
    </location>
    <ligand>
        <name>Mg(2+)</name>
        <dbReference type="ChEBI" id="CHEBI:18420"/>
        <label>2</label>
    </ligand>
</feature>
<feature type="binding site" evidence="1">
    <location>
        <position position="517"/>
    </location>
    <ligand>
        <name>Mg(2+)</name>
        <dbReference type="ChEBI" id="CHEBI:18420"/>
        <label>2</label>
    </ligand>
</feature>
<feature type="site" description="Interaction with DNA" evidence="1">
    <location>
        <position position="466"/>
    </location>
</feature>
<feature type="site" description="Interaction with DNA" evidence="1">
    <location>
        <position position="469"/>
    </location>
</feature>
<feature type="sequence conflict" description="In Ref. 3; AAC43046." evidence="3" ref="3">
    <original>V</original>
    <variation>D</variation>
    <location>
        <position position="127"/>
    </location>
</feature>
<proteinExistence type="evidence at transcript level"/>
<gene>
    <name evidence="1" type="primary">gyrB</name>
    <name type="ordered locus">CCNA_00159</name>
</gene>
<keyword id="KW-0067">ATP-binding</keyword>
<keyword id="KW-0963">Cytoplasm</keyword>
<keyword id="KW-0238">DNA-binding</keyword>
<keyword id="KW-0413">Isomerase</keyword>
<keyword id="KW-0460">Magnesium</keyword>
<keyword id="KW-0479">Metal-binding</keyword>
<keyword id="KW-0547">Nucleotide-binding</keyword>
<keyword id="KW-1185">Reference proteome</keyword>
<keyword id="KW-0799">Topoisomerase</keyword>
<accession>B8GXQ0</accession>
<accession>P48197</accession>
<name>GYRB_CAUVN</name>
<sequence>MTTEEAAAQYGADSIKVLKGLDAVRKRPGMYIGDTDDGSGLHHMVYEVVDNAIDEALAGHATKVQVILNADGSVTVTDDGRGIPVDMHEGEGVSAAEVIMTQLHAGGKFDQNSYKVSGGLHGVGVSVVNALSDWLELLIHRNGKVHQMRFERGDAVTSLKVTGDSPVRTEGPKAGETLTGTEVTFFPSKDTFAFIEFDRKTLEHRLRELAFLNSGVTIWFKDHRDVEPWEEKLFYEGGIEAFVRHLDKAKTPLLKAPIAVKGVKDKVEIDLALWWNDSYHEQMLCFTNNIPQRDGGTHLSAFRAALTRIITSYAESSGILKKEKVSLGGEDSREGLTCVLSVKVPDPKFSSQTKDKLVSSEVRPAVEGLVSEGLSTWFEEHPNEAKAIVTKIAEAAAAREAARKARELTRRKSALDITSLPGKLADCSERDPAKSEIFIVEGDSAGGSAKQARNRDNQAVLPLRGKILNVERARFDKMLSSDQIGTLITALGAGIGRDDFNPDKVRYHKIVLMTDADVDGAHIRTLLLTFFYRQMPELIERGYIYIAQPPLYKASKGKSSRYLKDDAEMDAFLVDEGVDGAELDLASGERMTGQDLLALVQTCRSAKANIDRLAARAPATAIEQAALSGLLGESPNAAAAATRLDLYAEEGDGPWSGERGDTGFVFSRVRRGVSERVVLDDVLLHAADARRLAERAVKLTEIFSGRAIFRRKDKSTTVRGPLDLVNAVLDAGRKGLTIQRYKGLGEMNPDQLWETTLDAEARTLLQVRVNHADDADDMFSRLMGDLVEPRREFIQENALDAEVDV</sequence>